<reference key="1">
    <citation type="journal article" date="2009" name="PLoS Genet.">
        <title>Organised genome dynamics in the Escherichia coli species results in highly diverse adaptive paths.</title>
        <authorList>
            <person name="Touchon M."/>
            <person name="Hoede C."/>
            <person name="Tenaillon O."/>
            <person name="Barbe V."/>
            <person name="Baeriswyl S."/>
            <person name="Bidet P."/>
            <person name="Bingen E."/>
            <person name="Bonacorsi S."/>
            <person name="Bouchier C."/>
            <person name="Bouvet O."/>
            <person name="Calteau A."/>
            <person name="Chiapello H."/>
            <person name="Clermont O."/>
            <person name="Cruveiller S."/>
            <person name="Danchin A."/>
            <person name="Diard M."/>
            <person name="Dossat C."/>
            <person name="Karoui M.E."/>
            <person name="Frapy E."/>
            <person name="Garry L."/>
            <person name="Ghigo J.M."/>
            <person name="Gilles A.M."/>
            <person name="Johnson J."/>
            <person name="Le Bouguenec C."/>
            <person name="Lescat M."/>
            <person name="Mangenot S."/>
            <person name="Martinez-Jehanne V."/>
            <person name="Matic I."/>
            <person name="Nassif X."/>
            <person name="Oztas S."/>
            <person name="Petit M.A."/>
            <person name="Pichon C."/>
            <person name="Rouy Z."/>
            <person name="Ruf C.S."/>
            <person name="Schneider D."/>
            <person name="Tourret J."/>
            <person name="Vacherie B."/>
            <person name="Vallenet D."/>
            <person name="Medigue C."/>
            <person name="Rocha E.P.C."/>
            <person name="Denamur E."/>
        </authorList>
    </citation>
    <scope>NUCLEOTIDE SEQUENCE [LARGE SCALE GENOMIC DNA]</scope>
    <source>
        <strain>S88 / ExPEC</strain>
    </source>
</reference>
<proteinExistence type="inferred from homology"/>
<sequence length="121" mass="13115">MYIYWILLGLAIATEITGTLSMKWASVSEGNGGFILMLVMISLSYIFLSFAVKKIALGVAYALWEGIGILFITLFSVLLFDESLSLMKIAGLTTLVAGIVLIKSGTRKARKPELEVNHGAV</sequence>
<organism>
    <name type="scientific">Escherichia coli O45:K1 (strain S88 / ExPEC)</name>
    <dbReference type="NCBI Taxonomy" id="585035"/>
    <lineage>
        <taxon>Bacteria</taxon>
        <taxon>Pseudomonadati</taxon>
        <taxon>Pseudomonadota</taxon>
        <taxon>Gammaproteobacteria</taxon>
        <taxon>Enterobacterales</taxon>
        <taxon>Enterobacteriaceae</taxon>
        <taxon>Escherichia</taxon>
    </lineage>
</organism>
<feature type="chain" id="PRO_1000197333" description="Spermidine export protein MdtJ">
    <location>
        <begin position="1"/>
        <end position="121"/>
    </location>
</feature>
<feature type="transmembrane region" description="Helical" evidence="1">
    <location>
        <begin position="1"/>
        <end position="21"/>
    </location>
</feature>
<feature type="transmembrane region" description="Helical" evidence="1">
    <location>
        <begin position="32"/>
        <end position="52"/>
    </location>
</feature>
<feature type="transmembrane region" description="Helical" evidence="1">
    <location>
        <begin position="55"/>
        <end position="75"/>
    </location>
</feature>
<feature type="transmembrane region" description="Helical" evidence="1">
    <location>
        <begin position="82"/>
        <end position="102"/>
    </location>
</feature>
<comment type="function">
    <text evidence="1">Catalyzes the excretion of spermidine.</text>
</comment>
<comment type="subunit">
    <text evidence="1">Forms a complex with MdtI.</text>
</comment>
<comment type="subcellular location">
    <subcellularLocation>
        <location evidence="1">Cell inner membrane</location>
        <topology evidence="1">Multi-pass membrane protein</topology>
    </subcellularLocation>
</comment>
<comment type="similarity">
    <text evidence="1">Belongs to the drug/metabolite transporter (DMT) superfamily. Small multidrug resistance (SMR) (TC 2.A.7.1) family. MdtJ subfamily.</text>
</comment>
<gene>
    <name evidence="1" type="primary">mdtJ</name>
    <name type="ordered locus">ECS88_1645</name>
</gene>
<name>MDTJ_ECO45</name>
<keyword id="KW-0997">Cell inner membrane</keyword>
<keyword id="KW-1003">Cell membrane</keyword>
<keyword id="KW-0472">Membrane</keyword>
<keyword id="KW-1185">Reference proteome</keyword>
<keyword id="KW-0812">Transmembrane</keyword>
<keyword id="KW-1133">Transmembrane helix</keyword>
<keyword id="KW-0813">Transport</keyword>
<dbReference type="EMBL" id="CU928161">
    <property type="protein sequence ID" value="CAR02960.1"/>
    <property type="molecule type" value="Genomic_DNA"/>
</dbReference>
<dbReference type="RefSeq" id="WP_000276149.1">
    <property type="nucleotide sequence ID" value="NC_011742.1"/>
</dbReference>
<dbReference type="SMR" id="B7M9V3"/>
<dbReference type="GeneID" id="93775748"/>
<dbReference type="KEGG" id="ecz:ECS88_1645"/>
<dbReference type="HOGENOM" id="CLU_133067_0_0_6"/>
<dbReference type="Proteomes" id="UP000000747">
    <property type="component" value="Chromosome"/>
</dbReference>
<dbReference type="GO" id="GO:0005886">
    <property type="term" value="C:plasma membrane"/>
    <property type="evidence" value="ECO:0007669"/>
    <property type="project" value="UniProtKB-SubCell"/>
</dbReference>
<dbReference type="GO" id="GO:0015199">
    <property type="term" value="F:amino-acid betaine transmembrane transporter activity"/>
    <property type="evidence" value="ECO:0007669"/>
    <property type="project" value="TreeGrafter"/>
</dbReference>
<dbReference type="GO" id="GO:0015297">
    <property type="term" value="F:antiporter activity"/>
    <property type="evidence" value="ECO:0007669"/>
    <property type="project" value="TreeGrafter"/>
</dbReference>
<dbReference type="GO" id="GO:0015220">
    <property type="term" value="F:choline transmembrane transporter activity"/>
    <property type="evidence" value="ECO:0007669"/>
    <property type="project" value="TreeGrafter"/>
</dbReference>
<dbReference type="GO" id="GO:0015606">
    <property type="term" value="F:spermidine transmembrane transporter activity"/>
    <property type="evidence" value="ECO:0007669"/>
    <property type="project" value="UniProtKB-UniRule"/>
</dbReference>
<dbReference type="GO" id="GO:0031460">
    <property type="term" value="P:glycine betaine transport"/>
    <property type="evidence" value="ECO:0007669"/>
    <property type="project" value="TreeGrafter"/>
</dbReference>
<dbReference type="FunFam" id="1.10.3730.20:FF:000001">
    <property type="entry name" value="Quaternary ammonium compound resistance transporter SugE"/>
    <property type="match status" value="1"/>
</dbReference>
<dbReference type="Gene3D" id="1.10.3730.20">
    <property type="match status" value="1"/>
</dbReference>
<dbReference type="HAMAP" id="MF_01598">
    <property type="entry name" value="MdtJ"/>
    <property type="match status" value="1"/>
</dbReference>
<dbReference type="InterPro" id="IPR000390">
    <property type="entry name" value="Small_drug/metabolite_transptr"/>
</dbReference>
<dbReference type="InterPro" id="IPR045324">
    <property type="entry name" value="Small_multidrug_res"/>
</dbReference>
<dbReference type="InterPro" id="IPR023740">
    <property type="entry name" value="Spermidine_export_MdtJ"/>
</dbReference>
<dbReference type="NCBIfam" id="NF007767">
    <property type="entry name" value="PRK10452.1"/>
    <property type="match status" value="1"/>
</dbReference>
<dbReference type="PANTHER" id="PTHR30561">
    <property type="entry name" value="SMR FAMILY PROTON-DEPENDENT DRUG EFFLUX TRANSPORTER SUGE"/>
    <property type="match status" value="1"/>
</dbReference>
<dbReference type="PANTHER" id="PTHR30561:SF2">
    <property type="entry name" value="SPERMIDINE EXPORT PROTEIN MDTJ"/>
    <property type="match status" value="1"/>
</dbReference>
<dbReference type="Pfam" id="PF00893">
    <property type="entry name" value="Multi_Drug_Res"/>
    <property type="match status" value="1"/>
</dbReference>
<dbReference type="SUPFAM" id="SSF103481">
    <property type="entry name" value="Multidrug resistance efflux transporter EmrE"/>
    <property type="match status" value="1"/>
</dbReference>
<accession>B7M9V3</accession>
<protein>
    <recommendedName>
        <fullName evidence="1">Spermidine export protein MdtJ</fullName>
    </recommendedName>
</protein>
<evidence type="ECO:0000255" key="1">
    <source>
        <dbReference type="HAMAP-Rule" id="MF_01598"/>
    </source>
</evidence>